<dbReference type="EC" id="2.7.1.11" evidence="1"/>
<dbReference type="EMBL" id="CP000407">
    <property type="protein sequence ID" value="ABP89509.1"/>
    <property type="molecule type" value="Genomic_DNA"/>
</dbReference>
<dbReference type="SMR" id="A4VTS0"/>
<dbReference type="STRING" id="391295.SSU05_0543"/>
<dbReference type="KEGG" id="ssu:SSU05_0543"/>
<dbReference type="eggNOG" id="COG0205">
    <property type="taxonomic scope" value="Bacteria"/>
</dbReference>
<dbReference type="HOGENOM" id="CLU_020655_0_1_9"/>
<dbReference type="UniPathway" id="UPA00109">
    <property type="reaction ID" value="UER00182"/>
</dbReference>
<dbReference type="GO" id="GO:0005945">
    <property type="term" value="C:6-phosphofructokinase complex"/>
    <property type="evidence" value="ECO:0007669"/>
    <property type="project" value="TreeGrafter"/>
</dbReference>
<dbReference type="GO" id="GO:0003872">
    <property type="term" value="F:6-phosphofructokinase activity"/>
    <property type="evidence" value="ECO:0007669"/>
    <property type="project" value="UniProtKB-UniRule"/>
</dbReference>
<dbReference type="GO" id="GO:0016208">
    <property type="term" value="F:AMP binding"/>
    <property type="evidence" value="ECO:0007669"/>
    <property type="project" value="TreeGrafter"/>
</dbReference>
<dbReference type="GO" id="GO:0005524">
    <property type="term" value="F:ATP binding"/>
    <property type="evidence" value="ECO:0007669"/>
    <property type="project" value="UniProtKB-KW"/>
</dbReference>
<dbReference type="GO" id="GO:0070095">
    <property type="term" value="F:fructose-6-phosphate binding"/>
    <property type="evidence" value="ECO:0007669"/>
    <property type="project" value="TreeGrafter"/>
</dbReference>
<dbReference type="GO" id="GO:0042802">
    <property type="term" value="F:identical protein binding"/>
    <property type="evidence" value="ECO:0007669"/>
    <property type="project" value="TreeGrafter"/>
</dbReference>
<dbReference type="GO" id="GO:0046872">
    <property type="term" value="F:metal ion binding"/>
    <property type="evidence" value="ECO:0007669"/>
    <property type="project" value="UniProtKB-KW"/>
</dbReference>
<dbReference type="GO" id="GO:0048029">
    <property type="term" value="F:monosaccharide binding"/>
    <property type="evidence" value="ECO:0007669"/>
    <property type="project" value="TreeGrafter"/>
</dbReference>
<dbReference type="GO" id="GO:0061621">
    <property type="term" value="P:canonical glycolysis"/>
    <property type="evidence" value="ECO:0007669"/>
    <property type="project" value="TreeGrafter"/>
</dbReference>
<dbReference type="GO" id="GO:0030388">
    <property type="term" value="P:fructose 1,6-bisphosphate metabolic process"/>
    <property type="evidence" value="ECO:0007669"/>
    <property type="project" value="TreeGrafter"/>
</dbReference>
<dbReference type="GO" id="GO:0006002">
    <property type="term" value="P:fructose 6-phosphate metabolic process"/>
    <property type="evidence" value="ECO:0007669"/>
    <property type="project" value="InterPro"/>
</dbReference>
<dbReference type="CDD" id="cd00763">
    <property type="entry name" value="Bacterial_PFK"/>
    <property type="match status" value="1"/>
</dbReference>
<dbReference type="FunFam" id="3.40.50.450:FF:000001">
    <property type="entry name" value="ATP-dependent 6-phosphofructokinase"/>
    <property type="match status" value="1"/>
</dbReference>
<dbReference type="FunFam" id="3.40.50.460:FF:000002">
    <property type="entry name" value="ATP-dependent 6-phosphofructokinase"/>
    <property type="match status" value="1"/>
</dbReference>
<dbReference type="Gene3D" id="3.40.50.450">
    <property type="match status" value="1"/>
</dbReference>
<dbReference type="Gene3D" id="3.40.50.460">
    <property type="entry name" value="Phosphofructokinase domain"/>
    <property type="match status" value="1"/>
</dbReference>
<dbReference type="HAMAP" id="MF_00339">
    <property type="entry name" value="Phosphofructokinase_I_B1"/>
    <property type="match status" value="1"/>
</dbReference>
<dbReference type="InterPro" id="IPR022953">
    <property type="entry name" value="ATP_PFK"/>
</dbReference>
<dbReference type="InterPro" id="IPR012003">
    <property type="entry name" value="ATP_PFK_prok-type"/>
</dbReference>
<dbReference type="InterPro" id="IPR012828">
    <property type="entry name" value="PFKA_ATP_prok"/>
</dbReference>
<dbReference type="InterPro" id="IPR015912">
    <property type="entry name" value="Phosphofructokinase_CS"/>
</dbReference>
<dbReference type="InterPro" id="IPR000023">
    <property type="entry name" value="Phosphofructokinase_dom"/>
</dbReference>
<dbReference type="InterPro" id="IPR035966">
    <property type="entry name" value="PKF_sf"/>
</dbReference>
<dbReference type="NCBIfam" id="TIGR02482">
    <property type="entry name" value="PFKA_ATP"/>
    <property type="match status" value="1"/>
</dbReference>
<dbReference type="NCBIfam" id="NF002872">
    <property type="entry name" value="PRK03202.1"/>
    <property type="match status" value="1"/>
</dbReference>
<dbReference type="PANTHER" id="PTHR13697:SF4">
    <property type="entry name" value="ATP-DEPENDENT 6-PHOSPHOFRUCTOKINASE"/>
    <property type="match status" value="1"/>
</dbReference>
<dbReference type="PANTHER" id="PTHR13697">
    <property type="entry name" value="PHOSPHOFRUCTOKINASE"/>
    <property type="match status" value="1"/>
</dbReference>
<dbReference type="Pfam" id="PF00365">
    <property type="entry name" value="PFK"/>
    <property type="match status" value="1"/>
</dbReference>
<dbReference type="PIRSF" id="PIRSF000532">
    <property type="entry name" value="ATP_PFK_prok"/>
    <property type="match status" value="1"/>
</dbReference>
<dbReference type="PRINTS" id="PR00476">
    <property type="entry name" value="PHFRCTKINASE"/>
</dbReference>
<dbReference type="SUPFAM" id="SSF53784">
    <property type="entry name" value="Phosphofructokinase"/>
    <property type="match status" value="1"/>
</dbReference>
<dbReference type="PROSITE" id="PS00433">
    <property type="entry name" value="PHOSPHOFRUCTOKINASE"/>
    <property type="match status" value="1"/>
</dbReference>
<protein>
    <recommendedName>
        <fullName evidence="1">ATP-dependent 6-phosphofructokinase</fullName>
        <shortName evidence="1">ATP-PFK</shortName>
        <shortName evidence="1">Phosphofructokinase</shortName>
        <ecNumber evidence="1">2.7.1.11</ecNumber>
    </recommendedName>
    <alternativeName>
        <fullName evidence="1">Phosphohexokinase</fullName>
    </alternativeName>
</protein>
<sequence length="336" mass="35491">MKRIAVLTSGGDAPGMNAAIRAVVRQAISEGMEVYGINEGYAGMVAGDIHELSARSVGDIISRGGTFLCSARYPEFAKLEGQLKGIEQLKKHGIEGVVVIGGDGSYHGAMRLTEHGFPAIGVPGTIDNDIVGTDFTIGFDTAVTTAMDAIDKIRDTSSSHRRTFVVEVMGRHAGDIALWAGIASGADVIVVPEEDFNINDVVDRIKAGYDKGKKHSIIVLAEGVMPAAQFAEELKAAGDTSDLRVTELGHIQRGGSPTARDRVLASRMGAHAVKLLKEGRGGLAVGIRNEQMVENPILGTAEEGALFSLTTDGKIVVNNPHKADLELADLNRNLSI</sequence>
<feature type="chain" id="PRO_1000059802" description="ATP-dependent 6-phosphofructokinase">
    <location>
        <begin position="1"/>
        <end position="336"/>
    </location>
</feature>
<feature type="active site" description="Proton acceptor" evidence="1">
    <location>
        <position position="127"/>
    </location>
</feature>
<feature type="binding site" evidence="1">
    <location>
        <position position="11"/>
    </location>
    <ligand>
        <name>ATP</name>
        <dbReference type="ChEBI" id="CHEBI:30616"/>
    </ligand>
</feature>
<feature type="binding site" evidence="1">
    <location>
        <begin position="21"/>
        <end position="25"/>
    </location>
    <ligand>
        <name>ADP</name>
        <dbReference type="ChEBI" id="CHEBI:456216"/>
        <note>allosteric activator; ligand shared between dimeric partners</note>
    </ligand>
</feature>
<feature type="binding site" evidence="1">
    <location>
        <begin position="72"/>
        <end position="73"/>
    </location>
    <ligand>
        <name>ATP</name>
        <dbReference type="ChEBI" id="CHEBI:30616"/>
    </ligand>
</feature>
<feature type="binding site" evidence="1">
    <location>
        <begin position="102"/>
        <end position="105"/>
    </location>
    <ligand>
        <name>ATP</name>
        <dbReference type="ChEBI" id="CHEBI:30616"/>
    </ligand>
</feature>
<feature type="binding site" evidence="1">
    <location>
        <position position="103"/>
    </location>
    <ligand>
        <name>Mg(2+)</name>
        <dbReference type="ChEBI" id="CHEBI:18420"/>
        <note>catalytic</note>
    </ligand>
</feature>
<feature type="binding site" description="in other chain" evidence="1">
    <location>
        <begin position="125"/>
        <end position="127"/>
    </location>
    <ligand>
        <name>substrate</name>
        <note>ligand shared between dimeric partners</note>
    </ligand>
</feature>
<feature type="binding site" description="in other chain" evidence="1">
    <location>
        <position position="154"/>
    </location>
    <ligand>
        <name>ADP</name>
        <dbReference type="ChEBI" id="CHEBI:456216"/>
        <note>allosteric activator; ligand shared between dimeric partners</note>
    </ligand>
</feature>
<feature type="binding site" evidence="1">
    <location>
        <position position="162"/>
    </location>
    <ligand>
        <name>substrate</name>
        <note>ligand shared between dimeric partners</note>
    </ligand>
</feature>
<feature type="binding site" description="in other chain" evidence="1">
    <location>
        <begin position="169"/>
        <end position="171"/>
    </location>
    <ligand>
        <name>substrate</name>
        <note>ligand shared between dimeric partners</note>
    </ligand>
</feature>
<feature type="binding site" description="in other chain" evidence="1">
    <location>
        <begin position="185"/>
        <end position="187"/>
    </location>
    <ligand>
        <name>ADP</name>
        <dbReference type="ChEBI" id="CHEBI:456216"/>
        <note>allosteric activator; ligand shared between dimeric partners</note>
    </ligand>
</feature>
<feature type="binding site" description="in other chain" evidence="1">
    <location>
        <position position="211"/>
    </location>
    <ligand>
        <name>ADP</name>
        <dbReference type="ChEBI" id="CHEBI:456216"/>
        <note>allosteric activator; ligand shared between dimeric partners</note>
    </ligand>
</feature>
<feature type="binding site" description="in other chain" evidence="1">
    <location>
        <begin position="213"/>
        <end position="215"/>
    </location>
    <ligand>
        <name>ADP</name>
        <dbReference type="ChEBI" id="CHEBI:456216"/>
        <note>allosteric activator; ligand shared between dimeric partners</note>
    </ligand>
</feature>
<feature type="binding site" description="in other chain" evidence="1">
    <location>
        <position position="222"/>
    </location>
    <ligand>
        <name>substrate</name>
        <note>ligand shared between dimeric partners</note>
    </ligand>
</feature>
<feature type="binding site" evidence="1">
    <location>
        <position position="244"/>
    </location>
    <ligand>
        <name>substrate</name>
        <note>ligand shared between dimeric partners</note>
    </ligand>
</feature>
<feature type="binding site" description="in other chain" evidence="1">
    <location>
        <begin position="250"/>
        <end position="253"/>
    </location>
    <ligand>
        <name>substrate</name>
        <note>ligand shared between dimeric partners</note>
    </ligand>
</feature>
<accession>A4VTS0</accession>
<name>PFKA_STRSY</name>
<keyword id="KW-0021">Allosteric enzyme</keyword>
<keyword id="KW-0067">ATP-binding</keyword>
<keyword id="KW-0963">Cytoplasm</keyword>
<keyword id="KW-0324">Glycolysis</keyword>
<keyword id="KW-0418">Kinase</keyword>
<keyword id="KW-0460">Magnesium</keyword>
<keyword id="KW-0479">Metal-binding</keyword>
<keyword id="KW-0547">Nucleotide-binding</keyword>
<keyword id="KW-0808">Transferase</keyword>
<proteinExistence type="inferred from homology"/>
<evidence type="ECO:0000255" key="1">
    <source>
        <dbReference type="HAMAP-Rule" id="MF_00339"/>
    </source>
</evidence>
<reference key="1">
    <citation type="journal article" date="2007" name="PLoS ONE">
        <title>A glimpse of streptococcal toxic shock syndrome from comparative genomics of S. suis 2 Chinese isolates.</title>
        <authorList>
            <person name="Chen C."/>
            <person name="Tang J."/>
            <person name="Dong W."/>
            <person name="Wang C."/>
            <person name="Feng Y."/>
            <person name="Wang J."/>
            <person name="Zheng F."/>
            <person name="Pan X."/>
            <person name="Liu D."/>
            <person name="Li M."/>
            <person name="Song Y."/>
            <person name="Zhu X."/>
            <person name="Sun H."/>
            <person name="Feng T."/>
            <person name="Guo Z."/>
            <person name="Ju A."/>
            <person name="Ge J."/>
            <person name="Dong Y."/>
            <person name="Sun W."/>
            <person name="Jiang Y."/>
            <person name="Wang J."/>
            <person name="Yan J."/>
            <person name="Yang H."/>
            <person name="Wang X."/>
            <person name="Gao G.F."/>
            <person name="Yang R."/>
            <person name="Wang J."/>
            <person name="Yu J."/>
        </authorList>
    </citation>
    <scope>NUCLEOTIDE SEQUENCE [LARGE SCALE GENOMIC DNA]</scope>
    <source>
        <strain>05ZYH33</strain>
    </source>
</reference>
<comment type="function">
    <text evidence="1">Catalyzes the phosphorylation of D-fructose 6-phosphate to fructose 1,6-bisphosphate by ATP, the first committing step of glycolysis.</text>
</comment>
<comment type="catalytic activity">
    <reaction evidence="1">
        <text>beta-D-fructose 6-phosphate + ATP = beta-D-fructose 1,6-bisphosphate + ADP + H(+)</text>
        <dbReference type="Rhea" id="RHEA:16109"/>
        <dbReference type="ChEBI" id="CHEBI:15378"/>
        <dbReference type="ChEBI" id="CHEBI:30616"/>
        <dbReference type="ChEBI" id="CHEBI:32966"/>
        <dbReference type="ChEBI" id="CHEBI:57634"/>
        <dbReference type="ChEBI" id="CHEBI:456216"/>
        <dbReference type="EC" id="2.7.1.11"/>
    </reaction>
</comment>
<comment type="cofactor">
    <cofactor evidence="1">
        <name>Mg(2+)</name>
        <dbReference type="ChEBI" id="CHEBI:18420"/>
    </cofactor>
</comment>
<comment type="activity regulation">
    <text evidence="1">Allosterically activated by ADP and other diphosphonucleosides, and allosterically inhibited by phosphoenolpyruvate.</text>
</comment>
<comment type="pathway">
    <text evidence="1">Carbohydrate degradation; glycolysis; D-glyceraldehyde 3-phosphate and glycerone phosphate from D-glucose: step 3/4.</text>
</comment>
<comment type="subunit">
    <text evidence="1">Homotetramer.</text>
</comment>
<comment type="subcellular location">
    <subcellularLocation>
        <location evidence="1">Cytoplasm</location>
    </subcellularLocation>
</comment>
<comment type="similarity">
    <text evidence="1">Belongs to the phosphofructokinase type A (PFKA) family. ATP-dependent PFK group I subfamily. Prokaryotic clade 'B1' sub-subfamily.</text>
</comment>
<organism>
    <name type="scientific">Streptococcus suis (strain 05ZYH33)</name>
    <dbReference type="NCBI Taxonomy" id="391295"/>
    <lineage>
        <taxon>Bacteria</taxon>
        <taxon>Bacillati</taxon>
        <taxon>Bacillota</taxon>
        <taxon>Bacilli</taxon>
        <taxon>Lactobacillales</taxon>
        <taxon>Streptococcaceae</taxon>
        <taxon>Streptococcus</taxon>
    </lineage>
</organism>
<gene>
    <name evidence="1" type="primary">pfkA</name>
    <name type="ordered locus">SSU05_0543</name>
</gene>